<gene>
    <name type="primary">NRM1</name>
    <name type="ORF">Kpol_1018p15</name>
</gene>
<evidence type="ECO:0000250" key="1"/>
<evidence type="ECO:0000305" key="2"/>
<comment type="function">
    <text evidence="1">Negative regulatory component of the MBF complex involved in cell-cycle-dependent transcription.</text>
</comment>
<comment type="subunit">
    <text evidence="1">Component of the MBF complex.</text>
</comment>
<comment type="subcellular location">
    <subcellularLocation>
        <location evidence="1">Cytoplasm</location>
    </subcellularLocation>
    <subcellularLocation>
        <location evidence="1">Nucleus</location>
    </subcellularLocation>
</comment>
<comment type="similarity">
    <text evidence="2">Belongs to the WHI5/NRM1 family.</text>
</comment>
<reference key="1">
    <citation type="journal article" date="2007" name="Proc. Natl. Acad. Sci. U.S.A.">
        <title>Independent sorting-out of thousands of duplicated gene pairs in two yeast species descended from a whole-genome duplication.</title>
        <authorList>
            <person name="Scannell D.R."/>
            <person name="Frank A.C."/>
            <person name="Conant G.C."/>
            <person name="Byrne K.P."/>
            <person name="Woolfit M."/>
            <person name="Wolfe K.H."/>
        </authorList>
    </citation>
    <scope>NUCLEOTIDE SEQUENCE [LARGE SCALE GENOMIC DNA]</scope>
    <source>
        <strain>ATCC 22028 / DSM 70294 / BCRC 21397 / CBS 2163 / NBRC 10782 / NRRL Y-8283 / UCD 57-17</strain>
    </source>
</reference>
<sequence length="271" mass="30462">METGRLPLKDLSNFQVNKLSILNTRNNIHLLKNSKHVHTTLPSIKSLISPTPVDPYTKQLTPTTPSVFLNNIQQADDKNVVSGGSFTAFKRASEGQLSKKLQIRLQFAYYKYITNQIDSKFKDIKKKHKNSVGGIRYSQYKSKEQKRTVKRRKLLVSNGSYKNPAKFTPTNDRSFPPINNNPIAFQKFHSSIGSPVRLSTASVINDSCTDKSSEAHSHSINNAFNETTLLTTPSSKSYKEKEVLINNKIQTTPMSVKAAKSLISLFTSNRQ</sequence>
<proteinExistence type="inferred from homology"/>
<name>NRM1_VANPO</name>
<feature type="chain" id="PRO_0000320393" description="Transcription factor NRM1">
    <location>
        <begin position="1"/>
        <end position="271"/>
    </location>
</feature>
<accession>A7TDL7</accession>
<protein>
    <recommendedName>
        <fullName>Transcription factor NRM1</fullName>
    </recommendedName>
</protein>
<dbReference type="EMBL" id="DS480378">
    <property type="protein sequence ID" value="EDO19487.1"/>
    <property type="molecule type" value="Genomic_DNA"/>
</dbReference>
<dbReference type="RefSeq" id="XP_001647345.1">
    <property type="nucleotide sequence ID" value="XM_001647295.1"/>
</dbReference>
<dbReference type="FunCoup" id="A7TDL7">
    <property type="interactions" value="98"/>
</dbReference>
<dbReference type="STRING" id="436907.A7TDL7"/>
<dbReference type="GeneID" id="5547847"/>
<dbReference type="KEGG" id="vpo:Kpol_1018p15"/>
<dbReference type="eggNOG" id="ENOG502S72A">
    <property type="taxonomic scope" value="Eukaryota"/>
</dbReference>
<dbReference type="HOGENOM" id="CLU_098759_0_0_1"/>
<dbReference type="InParanoid" id="A7TDL7"/>
<dbReference type="OMA" id="QFAYYKY"/>
<dbReference type="OrthoDB" id="4061338at2759"/>
<dbReference type="PhylomeDB" id="A7TDL7"/>
<dbReference type="Proteomes" id="UP000000267">
    <property type="component" value="Unassembled WGS sequence"/>
</dbReference>
<dbReference type="GO" id="GO:0005737">
    <property type="term" value="C:cytoplasm"/>
    <property type="evidence" value="ECO:0007669"/>
    <property type="project" value="UniProtKB-SubCell"/>
</dbReference>
<dbReference type="GO" id="GO:0005634">
    <property type="term" value="C:nucleus"/>
    <property type="evidence" value="ECO:0007669"/>
    <property type="project" value="UniProtKB-SubCell"/>
</dbReference>
<dbReference type="InterPro" id="IPR013734">
    <property type="entry name" value="TF_Nrm1/Whi5"/>
</dbReference>
<dbReference type="Pfam" id="PF08528">
    <property type="entry name" value="Whi5"/>
    <property type="match status" value="1"/>
</dbReference>
<organism>
    <name type="scientific">Vanderwaltozyma polyspora (strain ATCC 22028 / DSM 70294 / BCRC 21397 / CBS 2163 / NBRC 10782 / NRRL Y-8283 / UCD 57-17)</name>
    <name type="common">Kluyveromyces polysporus</name>
    <dbReference type="NCBI Taxonomy" id="436907"/>
    <lineage>
        <taxon>Eukaryota</taxon>
        <taxon>Fungi</taxon>
        <taxon>Dikarya</taxon>
        <taxon>Ascomycota</taxon>
        <taxon>Saccharomycotina</taxon>
        <taxon>Saccharomycetes</taxon>
        <taxon>Saccharomycetales</taxon>
        <taxon>Saccharomycetaceae</taxon>
        <taxon>Vanderwaltozyma</taxon>
    </lineage>
</organism>
<keyword id="KW-0963">Cytoplasm</keyword>
<keyword id="KW-0539">Nucleus</keyword>
<keyword id="KW-1185">Reference proteome</keyword>
<keyword id="KW-0678">Repressor</keyword>
<keyword id="KW-0804">Transcription</keyword>
<keyword id="KW-0805">Transcription regulation</keyword>